<protein>
    <recommendedName>
        <fullName evidence="1">Aspartate carbamoyltransferase catalytic subunit</fullName>
        <ecNumber evidence="1">2.1.3.2</ecNumber>
    </recommendedName>
    <alternativeName>
        <fullName evidence="1">Aspartate transcarbamylase</fullName>
        <shortName evidence="1">ATCase</shortName>
    </alternativeName>
</protein>
<organism>
    <name type="scientific">Buchnera aphidicola subsp. Acyrthosiphon pisum (strain APS)</name>
    <name type="common">Acyrthosiphon pisum symbiotic bacterium</name>
    <dbReference type="NCBI Taxonomy" id="107806"/>
    <lineage>
        <taxon>Bacteria</taxon>
        <taxon>Pseudomonadati</taxon>
        <taxon>Pseudomonadota</taxon>
        <taxon>Gammaproteobacteria</taxon>
        <taxon>Enterobacterales</taxon>
        <taxon>Erwiniaceae</taxon>
        <taxon>Buchnera</taxon>
    </lineage>
</organism>
<comment type="function">
    <text evidence="1">Catalyzes the condensation of carbamoyl phosphate and aspartate to form carbamoyl aspartate and inorganic phosphate, the committed step in the de novo pyrimidine nucleotide biosynthesis pathway.</text>
</comment>
<comment type="catalytic activity">
    <reaction evidence="1">
        <text>carbamoyl phosphate + L-aspartate = N-carbamoyl-L-aspartate + phosphate + H(+)</text>
        <dbReference type="Rhea" id="RHEA:20013"/>
        <dbReference type="ChEBI" id="CHEBI:15378"/>
        <dbReference type="ChEBI" id="CHEBI:29991"/>
        <dbReference type="ChEBI" id="CHEBI:32814"/>
        <dbReference type="ChEBI" id="CHEBI:43474"/>
        <dbReference type="ChEBI" id="CHEBI:58228"/>
        <dbReference type="EC" id="2.1.3.2"/>
    </reaction>
</comment>
<comment type="pathway">
    <text evidence="1">Pyrimidine metabolism; UMP biosynthesis via de novo pathway; (S)-dihydroorotate from bicarbonate: step 2/3.</text>
</comment>
<comment type="subunit">
    <text evidence="1">Heterododecamer (2C3:3R2) of six catalytic PyrB chains organized as two trimers (C3), and six regulatory PyrI chains organized as three dimers (R2).</text>
</comment>
<comment type="similarity">
    <text evidence="1 2">Belongs to the aspartate/ornithine carbamoyltransferase superfamily. ATCase family.</text>
</comment>
<gene>
    <name evidence="1" type="primary">pyrB</name>
    <name type="ordered locus">BU369</name>
</gene>
<dbReference type="EC" id="2.1.3.2" evidence="1"/>
<dbReference type="EMBL" id="BA000003">
    <property type="protein sequence ID" value="BAB13073.1"/>
    <property type="molecule type" value="Genomic_DNA"/>
</dbReference>
<dbReference type="RefSeq" id="NP_240187.1">
    <property type="nucleotide sequence ID" value="NC_002528.1"/>
</dbReference>
<dbReference type="RefSeq" id="WP_010896091.1">
    <property type="nucleotide sequence ID" value="NC_002528.1"/>
</dbReference>
<dbReference type="SMR" id="P57450"/>
<dbReference type="STRING" id="563178.BUAP5A_362"/>
<dbReference type="EnsemblBacteria" id="BAB13073">
    <property type="protein sequence ID" value="BAB13073"/>
    <property type="gene ID" value="BAB13073"/>
</dbReference>
<dbReference type="KEGG" id="buc:BU369"/>
<dbReference type="PATRIC" id="fig|107806.10.peg.383"/>
<dbReference type="eggNOG" id="COG0540">
    <property type="taxonomic scope" value="Bacteria"/>
</dbReference>
<dbReference type="HOGENOM" id="CLU_043846_1_2_6"/>
<dbReference type="UniPathway" id="UPA00070">
    <property type="reaction ID" value="UER00116"/>
</dbReference>
<dbReference type="Proteomes" id="UP000001806">
    <property type="component" value="Chromosome"/>
</dbReference>
<dbReference type="GO" id="GO:0005829">
    <property type="term" value="C:cytosol"/>
    <property type="evidence" value="ECO:0007669"/>
    <property type="project" value="TreeGrafter"/>
</dbReference>
<dbReference type="GO" id="GO:0016597">
    <property type="term" value="F:amino acid binding"/>
    <property type="evidence" value="ECO:0007669"/>
    <property type="project" value="InterPro"/>
</dbReference>
<dbReference type="GO" id="GO:0004070">
    <property type="term" value="F:aspartate carbamoyltransferase activity"/>
    <property type="evidence" value="ECO:0007669"/>
    <property type="project" value="UniProtKB-UniRule"/>
</dbReference>
<dbReference type="GO" id="GO:0006207">
    <property type="term" value="P:'de novo' pyrimidine nucleobase biosynthetic process"/>
    <property type="evidence" value="ECO:0007669"/>
    <property type="project" value="InterPro"/>
</dbReference>
<dbReference type="GO" id="GO:0044205">
    <property type="term" value="P:'de novo' UMP biosynthetic process"/>
    <property type="evidence" value="ECO:0007669"/>
    <property type="project" value="UniProtKB-UniRule"/>
</dbReference>
<dbReference type="GO" id="GO:0006520">
    <property type="term" value="P:amino acid metabolic process"/>
    <property type="evidence" value="ECO:0007669"/>
    <property type="project" value="InterPro"/>
</dbReference>
<dbReference type="FunFam" id="3.40.50.1370:FF:000001">
    <property type="entry name" value="Aspartate carbamoyltransferase"/>
    <property type="match status" value="1"/>
</dbReference>
<dbReference type="FunFam" id="3.40.50.1370:FF:000002">
    <property type="entry name" value="Aspartate carbamoyltransferase 2"/>
    <property type="match status" value="1"/>
</dbReference>
<dbReference type="Gene3D" id="3.40.50.1370">
    <property type="entry name" value="Aspartate/ornithine carbamoyltransferase"/>
    <property type="match status" value="2"/>
</dbReference>
<dbReference type="HAMAP" id="MF_00001">
    <property type="entry name" value="Asp_carb_tr"/>
    <property type="match status" value="1"/>
</dbReference>
<dbReference type="InterPro" id="IPR006132">
    <property type="entry name" value="Asp/Orn_carbamoyltranf_P-bd"/>
</dbReference>
<dbReference type="InterPro" id="IPR006130">
    <property type="entry name" value="Asp/Orn_carbamoylTrfase"/>
</dbReference>
<dbReference type="InterPro" id="IPR036901">
    <property type="entry name" value="Asp/Orn_carbamoylTrfase_sf"/>
</dbReference>
<dbReference type="InterPro" id="IPR002082">
    <property type="entry name" value="Asp_carbamoyltransf"/>
</dbReference>
<dbReference type="InterPro" id="IPR006131">
    <property type="entry name" value="Asp_carbamoyltransf_Asp/Orn-bd"/>
</dbReference>
<dbReference type="NCBIfam" id="TIGR00670">
    <property type="entry name" value="asp_carb_tr"/>
    <property type="match status" value="1"/>
</dbReference>
<dbReference type="NCBIfam" id="NF002032">
    <property type="entry name" value="PRK00856.1"/>
    <property type="match status" value="1"/>
</dbReference>
<dbReference type="PANTHER" id="PTHR45753:SF6">
    <property type="entry name" value="ASPARTATE CARBAMOYLTRANSFERASE"/>
    <property type="match status" value="1"/>
</dbReference>
<dbReference type="PANTHER" id="PTHR45753">
    <property type="entry name" value="ORNITHINE CARBAMOYLTRANSFERASE, MITOCHONDRIAL"/>
    <property type="match status" value="1"/>
</dbReference>
<dbReference type="Pfam" id="PF00185">
    <property type="entry name" value="OTCace"/>
    <property type="match status" value="1"/>
</dbReference>
<dbReference type="Pfam" id="PF02729">
    <property type="entry name" value="OTCace_N"/>
    <property type="match status" value="1"/>
</dbReference>
<dbReference type="PRINTS" id="PR00100">
    <property type="entry name" value="AOTCASE"/>
</dbReference>
<dbReference type="PRINTS" id="PR00101">
    <property type="entry name" value="ATCASE"/>
</dbReference>
<dbReference type="SUPFAM" id="SSF53671">
    <property type="entry name" value="Aspartate/ornithine carbamoyltransferase"/>
    <property type="match status" value="1"/>
</dbReference>
<dbReference type="PROSITE" id="PS00097">
    <property type="entry name" value="CARBAMOYLTRANSFERASE"/>
    <property type="match status" value="1"/>
</dbReference>
<keyword id="KW-0665">Pyrimidine biosynthesis</keyword>
<keyword id="KW-1185">Reference proteome</keyword>
<keyword id="KW-0808">Transferase</keyword>
<name>PYRB_BUCAI</name>
<accession>P57450</accession>
<evidence type="ECO:0000255" key="1">
    <source>
        <dbReference type="HAMAP-Rule" id="MF_00001"/>
    </source>
</evidence>
<evidence type="ECO:0000305" key="2"/>
<proteinExistence type="inferred from homology"/>
<feature type="chain" id="PRO_0000113110" description="Aspartate carbamoyltransferase catalytic subunit">
    <location>
        <begin position="1"/>
        <end position="310"/>
    </location>
</feature>
<feature type="binding site" evidence="1">
    <location>
        <position position="55"/>
    </location>
    <ligand>
        <name>carbamoyl phosphate</name>
        <dbReference type="ChEBI" id="CHEBI:58228"/>
    </ligand>
</feature>
<feature type="binding site" evidence="1">
    <location>
        <position position="56"/>
    </location>
    <ligand>
        <name>carbamoyl phosphate</name>
        <dbReference type="ChEBI" id="CHEBI:58228"/>
    </ligand>
</feature>
<feature type="binding site" evidence="1">
    <location>
        <position position="85"/>
    </location>
    <ligand>
        <name>L-aspartate</name>
        <dbReference type="ChEBI" id="CHEBI:29991"/>
    </ligand>
</feature>
<feature type="binding site" evidence="1">
    <location>
        <position position="106"/>
    </location>
    <ligand>
        <name>carbamoyl phosphate</name>
        <dbReference type="ChEBI" id="CHEBI:58228"/>
    </ligand>
</feature>
<feature type="binding site" evidence="1">
    <location>
        <position position="135"/>
    </location>
    <ligand>
        <name>carbamoyl phosphate</name>
        <dbReference type="ChEBI" id="CHEBI:58228"/>
    </ligand>
</feature>
<feature type="binding site" evidence="1">
    <location>
        <position position="138"/>
    </location>
    <ligand>
        <name>carbamoyl phosphate</name>
        <dbReference type="ChEBI" id="CHEBI:58228"/>
    </ligand>
</feature>
<feature type="binding site" evidence="1">
    <location>
        <position position="168"/>
    </location>
    <ligand>
        <name>L-aspartate</name>
        <dbReference type="ChEBI" id="CHEBI:29991"/>
    </ligand>
</feature>
<feature type="binding site" evidence="1">
    <location>
        <position position="230"/>
    </location>
    <ligand>
        <name>L-aspartate</name>
        <dbReference type="ChEBI" id="CHEBI:29991"/>
    </ligand>
</feature>
<feature type="binding site" evidence="1">
    <location>
        <position position="268"/>
    </location>
    <ligand>
        <name>carbamoyl phosphate</name>
        <dbReference type="ChEBI" id="CHEBI:58228"/>
    </ligand>
</feature>
<feature type="binding site" evidence="1">
    <location>
        <position position="269"/>
    </location>
    <ligand>
        <name>carbamoyl phosphate</name>
        <dbReference type="ChEBI" id="CHEBI:58228"/>
    </ligand>
</feature>
<sequence length="310" mass="35553">MRNSLYKKNIISINDLQRNELELVLNKSAMLKKTPQPNLLKNKVIASCFFEASTRTRLSFETAIYRLGASIVGFSDGNNISLEKKGETLTDTISVISSYVDAIIIRHPQEGSARLAAEFSNKKPIFNAGDGANQHPTQTLLDLFTIQETQNRLTQLNIAIVGDLKYGRTVHSLTQALAKFKHNKFYFISPDALKMPNYINNMLDKKEIYWKRHNNIEEIISEIDILYMTRIQKERLDSTEYANAKSKFVLRAAILKNARNNMKILHPLPRIDEIDRDVDYTPYAWYFKQAANGIYARQAILSLVLIEKHL</sequence>
<reference key="1">
    <citation type="journal article" date="2000" name="Nature">
        <title>Genome sequence of the endocellular bacterial symbiont of aphids Buchnera sp. APS.</title>
        <authorList>
            <person name="Shigenobu S."/>
            <person name="Watanabe H."/>
            <person name="Hattori M."/>
            <person name="Sakaki Y."/>
            <person name="Ishikawa H."/>
        </authorList>
    </citation>
    <scope>NUCLEOTIDE SEQUENCE [LARGE SCALE GENOMIC DNA]</scope>
    <source>
        <strain>APS</strain>
    </source>
</reference>